<organism>
    <name type="scientific">Pseudomonas fluorescens (strain Pf0-1)</name>
    <dbReference type="NCBI Taxonomy" id="205922"/>
    <lineage>
        <taxon>Bacteria</taxon>
        <taxon>Pseudomonadati</taxon>
        <taxon>Pseudomonadota</taxon>
        <taxon>Gammaproteobacteria</taxon>
        <taxon>Pseudomonadales</taxon>
        <taxon>Pseudomonadaceae</taxon>
        <taxon>Pseudomonas</taxon>
    </lineage>
</organism>
<protein>
    <recommendedName>
        <fullName evidence="1">Thiazole synthase</fullName>
        <ecNumber evidence="1">2.8.1.10</ecNumber>
    </recommendedName>
</protein>
<accession>Q3K587</accession>
<keyword id="KW-0963">Cytoplasm</keyword>
<keyword id="KW-0704">Schiff base</keyword>
<keyword id="KW-0784">Thiamine biosynthesis</keyword>
<keyword id="KW-0808">Transferase</keyword>
<sequence length="264" mass="28405">MSIVRSDKPFVLAGRTYQSRLLVGTGKYRDMEETRLAIEASGAEIVTFAVRRTNLGQIEGEPNLLEVLSPDRYTFLPNTAGCYDAVEAVRTCRLARELLDGHNLVKLEVLADQKTLFPNVIETLKAAEVLVKEGFDVMVYTSDDPIIARQLAEIGCIAVMPLAGLIGSGLGICNPYNLQIILEEAKIPVLVDAGVGTASDATISMELGCDAVLMNSAIAHAQQPIMMAEAMKHAIVAGRLAYLAGRMPKKLYASASSPLDGLIK</sequence>
<reference key="1">
    <citation type="journal article" date="2009" name="Genome Biol.">
        <title>Genomic and genetic analyses of diversity and plant interactions of Pseudomonas fluorescens.</title>
        <authorList>
            <person name="Silby M.W."/>
            <person name="Cerdeno-Tarraga A.M."/>
            <person name="Vernikos G.S."/>
            <person name="Giddens S.R."/>
            <person name="Jackson R.W."/>
            <person name="Preston G.M."/>
            <person name="Zhang X.-X."/>
            <person name="Moon C.D."/>
            <person name="Gehrig S.M."/>
            <person name="Godfrey S.A.C."/>
            <person name="Knight C.G."/>
            <person name="Malone J.G."/>
            <person name="Robinson Z."/>
            <person name="Spiers A.J."/>
            <person name="Harris S."/>
            <person name="Challis G.L."/>
            <person name="Yaxley A.M."/>
            <person name="Harris D."/>
            <person name="Seeger K."/>
            <person name="Murphy L."/>
            <person name="Rutter S."/>
            <person name="Squares R."/>
            <person name="Quail M.A."/>
            <person name="Saunders E."/>
            <person name="Mavromatis K."/>
            <person name="Brettin T.S."/>
            <person name="Bentley S.D."/>
            <person name="Hothersall J."/>
            <person name="Stephens E."/>
            <person name="Thomas C.M."/>
            <person name="Parkhill J."/>
            <person name="Levy S.B."/>
            <person name="Rainey P.B."/>
            <person name="Thomson N.R."/>
        </authorList>
    </citation>
    <scope>NUCLEOTIDE SEQUENCE [LARGE SCALE GENOMIC DNA]</scope>
    <source>
        <strain>Pf0-1</strain>
    </source>
</reference>
<name>THIG_PSEPF</name>
<evidence type="ECO:0000255" key="1">
    <source>
        <dbReference type="HAMAP-Rule" id="MF_00443"/>
    </source>
</evidence>
<proteinExistence type="inferred from homology"/>
<feature type="chain" id="PRO_0000236357" description="Thiazole synthase">
    <location>
        <begin position="1"/>
        <end position="264"/>
    </location>
</feature>
<feature type="active site" description="Schiff-base intermediate with DXP" evidence="1">
    <location>
        <position position="106"/>
    </location>
</feature>
<feature type="binding site" evidence="1">
    <location>
        <position position="167"/>
    </location>
    <ligand>
        <name>1-deoxy-D-xylulose 5-phosphate</name>
        <dbReference type="ChEBI" id="CHEBI:57792"/>
    </ligand>
</feature>
<feature type="binding site" evidence="1">
    <location>
        <begin position="193"/>
        <end position="194"/>
    </location>
    <ligand>
        <name>1-deoxy-D-xylulose 5-phosphate</name>
        <dbReference type="ChEBI" id="CHEBI:57792"/>
    </ligand>
</feature>
<feature type="binding site" evidence="1">
    <location>
        <begin position="215"/>
        <end position="216"/>
    </location>
    <ligand>
        <name>1-deoxy-D-xylulose 5-phosphate</name>
        <dbReference type="ChEBI" id="CHEBI:57792"/>
    </ligand>
</feature>
<dbReference type="EC" id="2.8.1.10" evidence="1"/>
<dbReference type="EMBL" id="CP000094">
    <property type="protein sequence ID" value="ABA77067.1"/>
    <property type="molecule type" value="Genomic_DNA"/>
</dbReference>
<dbReference type="RefSeq" id="WP_007953385.1">
    <property type="nucleotide sequence ID" value="NC_007492.2"/>
</dbReference>
<dbReference type="SMR" id="Q3K587"/>
<dbReference type="KEGG" id="pfo:Pfl01_5330"/>
<dbReference type="eggNOG" id="COG2022">
    <property type="taxonomic scope" value="Bacteria"/>
</dbReference>
<dbReference type="HOGENOM" id="CLU_062233_1_1_6"/>
<dbReference type="UniPathway" id="UPA00060"/>
<dbReference type="Proteomes" id="UP000002704">
    <property type="component" value="Chromosome"/>
</dbReference>
<dbReference type="GO" id="GO:0005737">
    <property type="term" value="C:cytoplasm"/>
    <property type="evidence" value="ECO:0007669"/>
    <property type="project" value="UniProtKB-SubCell"/>
</dbReference>
<dbReference type="GO" id="GO:1990107">
    <property type="term" value="F:thiazole synthase activity"/>
    <property type="evidence" value="ECO:0007669"/>
    <property type="project" value="UniProtKB-EC"/>
</dbReference>
<dbReference type="GO" id="GO:0009229">
    <property type="term" value="P:thiamine diphosphate biosynthetic process"/>
    <property type="evidence" value="ECO:0007669"/>
    <property type="project" value="UniProtKB-UniRule"/>
</dbReference>
<dbReference type="CDD" id="cd04728">
    <property type="entry name" value="ThiG"/>
    <property type="match status" value="1"/>
</dbReference>
<dbReference type="Gene3D" id="3.20.20.70">
    <property type="entry name" value="Aldolase class I"/>
    <property type="match status" value="1"/>
</dbReference>
<dbReference type="HAMAP" id="MF_00443">
    <property type="entry name" value="ThiG"/>
    <property type="match status" value="1"/>
</dbReference>
<dbReference type="InterPro" id="IPR013785">
    <property type="entry name" value="Aldolase_TIM"/>
</dbReference>
<dbReference type="InterPro" id="IPR033983">
    <property type="entry name" value="Thiazole_synthase_ThiG"/>
</dbReference>
<dbReference type="InterPro" id="IPR008867">
    <property type="entry name" value="ThiG"/>
</dbReference>
<dbReference type="PANTHER" id="PTHR34266">
    <property type="entry name" value="THIAZOLE SYNTHASE"/>
    <property type="match status" value="1"/>
</dbReference>
<dbReference type="PANTHER" id="PTHR34266:SF2">
    <property type="entry name" value="THIAZOLE SYNTHASE"/>
    <property type="match status" value="1"/>
</dbReference>
<dbReference type="Pfam" id="PF05690">
    <property type="entry name" value="ThiG"/>
    <property type="match status" value="1"/>
</dbReference>
<dbReference type="SUPFAM" id="SSF110399">
    <property type="entry name" value="ThiG-like"/>
    <property type="match status" value="1"/>
</dbReference>
<comment type="function">
    <text evidence="1">Catalyzes the rearrangement of 1-deoxy-D-xylulose 5-phosphate (DXP) to produce the thiazole phosphate moiety of thiamine. Sulfur is provided by the thiocarboxylate moiety of the carrier protein ThiS. In vitro, sulfur can be provided by H(2)S.</text>
</comment>
<comment type="catalytic activity">
    <reaction evidence="1">
        <text>[ThiS sulfur-carrier protein]-C-terminal-Gly-aminoethanethioate + 2-iminoacetate + 1-deoxy-D-xylulose 5-phosphate = [ThiS sulfur-carrier protein]-C-terminal Gly-Gly + 2-[(2R,5Z)-2-carboxy-4-methylthiazol-5(2H)-ylidene]ethyl phosphate + 2 H2O + H(+)</text>
        <dbReference type="Rhea" id="RHEA:26297"/>
        <dbReference type="Rhea" id="RHEA-COMP:12909"/>
        <dbReference type="Rhea" id="RHEA-COMP:19908"/>
        <dbReference type="ChEBI" id="CHEBI:15377"/>
        <dbReference type="ChEBI" id="CHEBI:15378"/>
        <dbReference type="ChEBI" id="CHEBI:57792"/>
        <dbReference type="ChEBI" id="CHEBI:62899"/>
        <dbReference type="ChEBI" id="CHEBI:77846"/>
        <dbReference type="ChEBI" id="CHEBI:90778"/>
        <dbReference type="ChEBI" id="CHEBI:232372"/>
        <dbReference type="EC" id="2.8.1.10"/>
    </reaction>
</comment>
<comment type="pathway">
    <text evidence="1">Cofactor biosynthesis; thiamine diphosphate biosynthesis.</text>
</comment>
<comment type="subunit">
    <text evidence="1">Homotetramer. Forms heterodimers with either ThiH or ThiS.</text>
</comment>
<comment type="subcellular location">
    <subcellularLocation>
        <location evidence="1">Cytoplasm</location>
    </subcellularLocation>
</comment>
<comment type="similarity">
    <text evidence="1">Belongs to the ThiG family.</text>
</comment>
<gene>
    <name evidence="1" type="primary">thiG</name>
    <name type="ordered locus">Pfl01_5330</name>
</gene>